<accession>B0KS79</accession>
<organism>
    <name type="scientific">Pseudomonas putida (strain GB-1)</name>
    <dbReference type="NCBI Taxonomy" id="76869"/>
    <lineage>
        <taxon>Bacteria</taxon>
        <taxon>Pseudomonadati</taxon>
        <taxon>Pseudomonadota</taxon>
        <taxon>Gammaproteobacteria</taxon>
        <taxon>Pseudomonadales</taxon>
        <taxon>Pseudomonadaceae</taxon>
        <taxon>Pseudomonas</taxon>
    </lineage>
</organism>
<comment type="catalytic activity">
    <reaction evidence="1">
        <text>sn-glycerol 3-phosphate + an acyl-CoA = a 1-acyl-sn-glycero-3-phosphate + CoA</text>
        <dbReference type="Rhea" id="RHEA:15325"/>
        <dbReference type="ChEBI" id="CHEBI:57287"/>
        <dbReference type="ChEBI" id="CHEBI:57597"/>
        <dbReference type="ChEBI" id="CHEBI:57970"/>
        <dbReference type="ChEBI" id="CHEBI:58342"/>
        <dbReference type="EC" id="2.3.1.15"/>
    </reaction>
</comment>
<comment type="pathway">
    <text evidence="1">Phospholipid metabolism; CDP-diacylglycerol biosynthesis; CDP-diacylglycerol from sn-glycerol 3-phosphate: step 1/3.</text>
</comment>
<comment type="subcellular location">
    <subcellularLocation>
        <location evidence="1">Cell inner membrane</location>
        <topology evidence="1">Peripheral membrane protein</topology>
        <orientation evidence="1">Cytoplasmic side</orientation>
    </subcellularLocation>
</comment>
<comment type="domain">
    <text evidence="1">The HXXXXD motif is essential for acyltransferase activity and may constitute the binding site for the phosphate moiety of the glycerol-3-phosphate.</text>
</comment>
<comment type="similarity">
    <text evidence="1">Belongs to the GPAT/DAPAT family.</text>
</comment>
<sequence>MTRSPLHRLIFGGLRRLLYLWVRSETINQSSMTLNLDRSRPVFYALPSPSLTDLAVLDHECTKAGLPRPVLPVAVGPLQEPAAFFYLTPDPDWLGRQDKSGAPPTLERLVAAVSQHAEEDAQIIPVSVFWGQTPASESSPWKLLFADSWAVTGRLRRLLTVLILGRKTRVQFSAPIHLRELVQHNKGHARTVRMAQRLMRVHFRNLKTAVIGPDISHRRNLVKGLVHAPLVRQAIADEAQRENLPLAKAEAQALRYGNEIASDYTYTVIRFLEVVLSWFWNKIYDGIKVNHIEQVQGIAPGHEVIYVPCHRSHIDYLLLSYLLFRNGLTPPHVAAGINLNMPVVGNLLRRGGAFFMRRTFKGNPLYTAVFNEYLHTLYTKGFPVEYFVEGGRSRTGRMLQPRTGMLAITLRSFLRSSRTPIVFVPVYIGYERVLEGRTYLGELRGASKKKESVLDIFKVFGALKQRFGQVYVNFGEPIRLAGFLDQQQPGWREQDHGPQYRPDWLNATTTRLGETVARHLNEAAAINPVNLVALALLSTSRLALDERALTRVLDLYLALLRQVPYSPHTTLPDGDGQALIEHVRSMNLVAEQKDALGRILFLDEGNAVLMTYYRNNVLHIFALPALLASFFLSSSRMSRELLGQYVHALYPYLQAELFLRWAPEQLDEVIDQWLAALVEQGLLRQENDVYVRPAPSSRQFVLLTLLARTITQTLQRFYMATSLLINSGQNSLSAEALEDLCVMMAQRLSILHGLNAPEFFDKTLFRHFIQTLLQQGVLHTDTQGKLGYHDKLGELAEGVAKRVLSAELRLSIRQVALHRDDGLESSTI</sequence>
<evidence type="ECO:0000255" key="1">
    <source>
        <dbReference type="HAMAP-Rule" id="MF_00393"/>
    </source>
</evidence>
<gene>
    <name evidence="1" type="primary">plsB</name>
    <name type="ordered locus">PputGB1_1126</name>
</gene>
<dbReference type="EC" id="2.3.1.15" evidence="1"/>
<dbReference type="EMBL" id="CP000926">
    <property type="protein sequence ID" value="ABY97034.1"/>
    <property type="molecule type" value="Genomic_DNA"/>
</dbReference>
<dbReference type="RefSeq" id="WP_012270815.1">
    <property type="nucleotide sequence ID" value="NC_010322.1"/>
</dbReference>
<dbReference type="SMR" id="B0KS79"/>
<dbReference type="KEGG" id="ppg:PputGB1_1126"/>
<dbReference type="eggNOG" id="COG2937">
    <property type="taxonomic scope" value="Bacteria"/>
</dbReference>
<dbReference type="HOGENOM" id="CLU_015407_0_0_6"/>
<dbReference type="UniPathway" id="UPA00557">
    <property type="reaction ID" value="UER00612"/>
</dbReference>
<dbReference type="Proteomes" id="UP000002157">
    <property type="component" value="Chromosome"/>
</dbReference>
<dbReference type="GO" id="GO:0005886">
    <property type="term" value="C:plasma membrane"/>
    <property type="evidence" value="ECO:0007669"/>
    <property type="project" value="UniProtKB-SubCell"/>
</dbReference>
<dbReference type="GO" id="GO:0004366">
    <property type="term" value="F:glycerol-3-phosphate O-acyltransferase activity"/>
    <property type="evidence" value="ECO:0007669"/>
    <property type="project" value="UniProtKB-UniRule"/>
</dbReference>
<dbReference type="GO" id="GO:0016024">
    <property type="term" value="P:CDP-diacylglycerol biosynthetic process"/>
    <property type="evidence" value="ECO:0007669"/>
    <property type="project" value="UniProtKB-UniRule"/>
</dbReference>
<dbReference type="GO" id="GO:0006631">
    <property type="term" value="P:fatty acid metabolic process"/>
    <property type="evidence" value="ECO:0007669"/>
    <property type="project" value="TreeGrafter"/>
</dbReference>
<dbReference type="CDD" id="cd07993">
    <property type="entry name" value="LPLAT_DHAPAT-like"/>
    <property type="match status" value="1"/>
</dbReference>
<dbReference type="HAMAP" id="MF_00393">
    <property type="entry name" value="Glyc3P_acyltrans"/>
    <property type="match status" value="1"/>
</dbReference>
<dbReference type="InterPro" id="IPR022284">
    <property type="entry name" value="GPAT/DHAPAT"/>
</dbReference>
<dbReference type="InterPro" id="IPR045520">
    <property type="entry name" value="GPAT/DHAPAT_C"/>
</dbReference>
<dbReference type="InterPro" id="IPR041728">
    <property type="entry name" value="GPAT/DHAPAT_LPLAT"/>
</dbReference>
<dbReference type="InterPro" id="IPR028354">
    <property type="entry name" value="GPAT_PlsB"/>
</dbReference>
<dbReference type="InterPro" id="IPR002123">
    <property type="entry name" value="Plipid/glycerol_acylTrfase"/>
</dbReference>
<dbReference type="NCBIfam" id="TIGR03703">
    <property type="entry name" value="plsB"/>
    <property type="match status" value="1"/>
</dbReference>
<dbReference type="NCBIfam" id="NF003441">
    <property type="entry name" value="PRK04974.1"/>
    <property type="match status" value="1"/>
</dbReference>
<dbReference type="PANTHER" id="PTHR12563:SF17">
    <property type="entry name" value="DIHYDROXYACETONE PHOSPHATE ACYLTRANSFERASE"/>
    <property type="match status" value="1"/>
</dbReference>
<dbReference type="PANTHER" id="PTHR12563">
    <property type="entry name" value="GLYCEROL-3-PHOSPHATE ACYLTRANSFERASE"/>
    <property type="match status" value="1"/>
</dbReference>
<dbReference type="Pfam" id="PF01553">
    <property type="entry name" value="Acyltransferase"/>
    <property type="match status" value="1"/>
</dbReference>
<dbReference type="Pfam" id="PF19277">
    <property type="entry name" value="GPAT_C"/>
    <property type="match status" value="1"/>
</dbReference>
<dbReference type="PIRSF" id="PIRSF500064">
    <property type="entry name" value="GPAT"/>
    <property type="match status" value="1"/>
</dbReference>
<dbReference type="PIRSF" id="PIRSF000437">
    <property type="entry name" value="GPAT_DHAPAT"/>
    <property type="match status" value="1"/>
</dbReference>
<dbReference type="SMART" id="SM00563">
    <property type="entry name" value="PlsC"/>
    <property type="match status" value="1"/>
</dbReference>
<dbReference type="SUPFAM" id="SSF69593">
    <property type="entry name" value="Glycerol-3-phosphate (1)-acyltransferase"/>
    <property type="match status" value="1"/>
</dbReference>
<feature type="chain" id="PRO_1000080288" description="Glycerol-3-phosphate acyltransferase">
    <location>
        <begin position="1"/>
        <end position="828"/>
    </location>
</feature>
<feature type="short sequence motif" description="HXXXXD motif">
    <location>
        <begin position="309"/>
        <end position="314"/>
    </location>
</feature>
<protein>
    <recommendedName>
        <fullName evidence="1">Glycerol-3-phosphate acyltransferase</fullName>
        <shortName evidence="1">GPAT</shortName>
        <ecNumber evidence="1">2.3.1.15</ecNumber>
    </recommendedName>
</protein>
<keyword id="KW-0012">Acyltransferase</keyword>
<keyword id="KW-0997">Cell inner membrane</keyword>
<keyword id="KW-1003">Cell membrane</keyword>
<keyword id="KW-0444">Lipid biosynthesis</keyword>
<keyword id="KW-0443">Lipid metabolism</keyword>
<keyword id="KW-0472">Membrane</keyword>
<keyword id="KW-0594">Phospholipid biosynthesis</keyword>
<keyword id="KW-1208">Phospholipid metabolism</keyword>
<keyword id="KW-0808">Transferase</keyword>
<name>PLSB_PSEPG</name>
<proteinExistence type="inferred from homology"/>
<reference key="1">
    <citation type="submission" date="2008-01" db="EMBL/GenBank/DDBJ databases">
        <title>Complete sequence of Pseudomonas putida GB-1.</title>
        <authorList>
            <consortium name="US DOE Joint Genome Institute"/>
            <person name="Copeland A."/>
            <person name="Lucas S."/>
            <person name="Lapidus A."/>
            <person name="Barry K."/>
            <person name="Glavina del Rio T."/>
            <person name="Dalin E."/>
            <person name="Tice H."/>
            <person name="Pitluck S."/>
            <person name="Bruce D."/>
            <person name="Goodwin L."/>
            <person name="Chertkov O."/>
            <person name="Brettin T."/>
            <person name="Detter J.C."/>
            <person name="Han C."/>
            <person name="Kuske C.R."/>
            <person name="Schmutz J."/>
            <person name="Larimer F."/>
            <person name="Land M."/>
            <person name="Hauser L."/>
            <person name="Kyrpides N."/>
            <person name="Kim E."/>
            <person name="McCarthy J.K."/>
            <person name="Richardson P."/>
        </authorList>
    </citation>
    <scope>NUCLEOTIDE SEQUENCE [LARGE SCALE GENOMIC DNA]</scope>
    <source>
        <strain>GB-1</strain>
    </source>
</reference>